<keyword id="KW-0046">Antibiotic resistance</keyword>
<keyword id="KW-1003">Cell membrane</keyword>
<keyword id="KW-0133">Cell shape</keyword>
<keyword id="KW-0961">Cell wall biogenesis/degradation</keyword>
<keyword id="KW-0378">Hydrolase</keyword>
<keyword id="KW-0472">Membrane</keyword>
<keyword id="KW-0573">Peptidoglycan synthesis</keyword>
<keyword id="KW-1185">Reference proteome</keyword>
<keyword id="KW-0812">Transmembrane</keyword>
<keyword id="KW-1133">Transmembrane helix</keyword>
<dbReference type="EC" id="3.6.1.27" evidence="1"/>
<dbReference type="EMBL" id="BX248357">
    <property type="protein sequence ID" value="CAE49791.1"/>
    <property type="molecule type" value="Genomic_DNA"/>
</dbReference>
<dbReference type="SMR" id="P60937"/>
<dbReference type="STRING" id="257309.DIP1262"/>
<dbReference type="KEGG" id="cdi:DIP1262"/>
<dbReference type="HOGENOM" id="CLU_060296_1_0_11"/>
<dbReference type="Proteomes" id="UP000002198">
    <property type="component" value="Chromosome"/>
</dbReference>
<dbReference type="GO" id="GO:0005886">
    <property type="term" value="C:plasma membrane"/>
    <property type="evidence" value="ECO:0007669"/>
    <property type="project" value="UniProtKB-SubCell"/>
</dbReference>
<dbReference type="GO" id="GO:0050380">
    <property type="term" value="F:undecaprenyl-diphosphatase activity"/>
    <property type="evidence" value="ECO:0007669"/>
    <property type="project" value="UniProtKB-UniRule"/>
</dbReference>
<dbReference type="GO" id="GO:0071555">
    <property type="term" value="P:cell wall organization"/>
    <property type="evidence" value="ECO:0007669"/>
    <property type="project" value="UniProtKB-KW"/>
</dbReference>
<dbReference type="GO" id="GO:0009252">
    <property type="term" value="P:peptidoglycan biosynthetic process"/>
    <property type="evidence" value="ECO:0007669"/>
    <property type="project" value="UniProtKB-KW"/>
</dbReference>
<dbReference type="GO" id="GO:0008360">
    <property type="term" value="P:regulation of cell shape"/>
    <property type="evidence" value="ECO:0007669"/>
    <property type="project" value="UniProtKB-KW"/>
</dbReference>
<dbReference type="GO" id="GO:0046677">
    <property type="term" value="P:response to antibiotic"/>
    <property type="evidence" value="ECO:0007669"/>
    <property type="project" value="UniProtKB-UniRule"/>
</dbReference>
<dbReference type="HAMAP" id="MF_01006">
    <property type="entry name" value="Undec_diphosphatase"/>
    <property type="match status" value="1"/>
</dbReference>
<dbReference type="InterPro" id="IPR003824">
    <property type="entry name" value="UppP"/>
</dbReference>
<dbReference type="NCBIfam" id="NF001392">
    <property type="entry name" value="PRK00281.2-1"/>
    <property type="match status" value="1"/>
</dbReference>
<dbReference type="NCBIfam" id="TIGR00753">
    <property type="entry name" value="undec_PP_bacA"/>
    <property type="match status" value="1"/>
</dbReference>
<dbReference type="PANTHER" id="PTHR30622">
    <property type="entry name" value="UNDECAPRENYL-DIPHOSPHATASE"/>
    <property type="match status" value="1"/>
</dbReference>
<dbReference type="PANTHER" id="PTHR30622:SF4">
    <property type="entry name" value="UNDECAPRENYL-DIPHOSPHATASE"/>
    <property type="match status" value="1"/>
</dbReference>
<dbReference type="Pfam" id="PF02673">
    <property type="entry name" value="BacA"/>
    <property type="match status" value="1"/>
</dbReference>
<comment type="function">
    <text evidence="1">Catalyzes the dephosphorylation of undecaprenyl diphosphate (UPP). Confers resistance to bacitracin.</text>
</comment>
<comment type="catalytic activity">
    <reaction evidence="1">
        <text>di-trans,octa-cis-undecaprenyl diphosphate + H2O = di-trans,octa-cis-undecaprenyl phosphate + phosphate + H(+)</text>
        <dbReference type="Rhea" id="RHEA:28094"/>
        <dbReference type="ChEBI" id="CHEBI:15377"/>
        <dbReference type="ChEBI" id="CHEBI:15378"/>
        <dbReference type="ChEBI" id="CHEBI:43474"/>
        <dbReference type="ChEBI" id="CHEBI:58405"/>
        <dbReference type="ChEBI" id="CHEBI:60392"/>
        <dbReference type="EC" id="3.6.1.27"/>
    </reaction>
</comment>
<comment type="subcellular location">
    <subcellularLocation>
        <location evidence="1">Cell membrane</location>
        <topology evidence="1">Multi-pass membrane protein</topology>
    </subcellularLocation>
</comment>
<comment type="miscellaneous">
    <text>Bacitracin is thought to be involved in the inhibition of peptidoglycan synthesis by sequestering undecaprenyl diphosphate, thereby reducing the pool of lipid carrier available.</text>
</comment>
<comment type="similarity">
    <text evidence="1">Belongs to the UppP family.</text>
</comment>
<protein>
    <recommendedName>
        <fullName evidence="1">Undecaprenyl-diphosphatase</fullName>
        <ecNumber evidence="1">3.6.1.27</ecNumber>
    </recommendedName>
    <alternativeName>
        <fullName evidence="1">Bacitracin resistance protein</fullName>
    </alternativeName>
    <alternativeName>
        <fullName evidence="1">Undecaprenyl pyrophosphate phosphatase</fullName>
    </alternativeName>
</protein>
<sequence>MTQDPSSQISWSQTIVLSIVQGLTEFLPISSSGHLRIVSELFWGKDAGASFTAVVQLGTEAAVLVYFAKDIAKILTGWFRGLFDKKQRGFDYRMGWMVIVGTLPVSIVGLLAKDIIRDNLRNMWITASVLIAFSFVFIAAEKWGSKRRSFDQLTMRDAVIMGCAQCLALIPGVSRSGGTVSAGLFVGLDREVATRFSFLLAIPAVLASGLFSLPDAFAPDAGQAASGMQLAVGTGIAFALGYASIAWLLKFVGSHSFSWFAAYRIPVGLLVMALLATGMLTA</sequence>
<accession>P60937</accession>
<evidence type="ECO:0000255" key="1">
    <source>
        <dbReference type="HAMAP-Rule" id="MF_01006"/>
    </source>
</evidence>
<gene>
    <name evidence="1" type="primary">uppP</name>
    <name type="synonym">bacA</name>
    <name type="synonym">upk</name>
    <name type="ordered locus">DIP1262</name>
</gene>
<name>UPPP_CORDI</name>
<organism>
    <name type="scientific">Corynebacterium diphtheriae (strain ATCC 700971 / NCTC 13129 / Biotype gravis)</name>
    <dbReference type="NCBI Taxonomy" id="257309"/>
    <lineage>
        <taxon>Bacteria</taxon>
        <taxon>Bacillati</taxon>
        <taxon>Actinomycetota</taxon>
        <taxon>Actinomycetes</taxon>
        <taxon>Mycobacteriales</taxon>
        <taxon>Corynebacteriaceae</taxon>
        <taxon>Corynebacterium</taxon>
    </lineage>
</organism>
<reference key="1">
    <citation type="journal article" date="2003" name="Nucleic Acids Res.">
        <title>The complete genome sequence and analysis of Corynebacterium diphtheriae NCTC13129.</title>
        <authorList>
            <person name="Cerdeno-Tarraga A.-M."/>
            <person name="Efstratiou A."/>
            <person name="Dover L.G."/>
            <person name="Holden M.T.G."/>
            <person name="Pallen M.J."/>
            <person name="Bentley S.D."/>
            <person name="Besra G.S."/>
            <person name="Churcher C.M."/>
            <person name="James K.D."/>
            <person name="De Zoysa A."/>
            <person name="Chillingworth T."/>
            <person name="Cronin A."/>
            <person name="Dowd L."/>
            <person name="Feltwell T."/>
            <person name="Hamlin N."/>
            <person name="Holroyd S."/>
            <person name="Jagels K."/>
            <person name="Moule S."/>
            <person name="Quail M.A."/>
            <person name="Rabbinowitsch E."/>
            <person name="Rutherford K.M."/>
            <person name="Thomson N.R."/>
            <person name="Unwin L."/>
            <person name="Whitehead S."/>
            <person name="Barrell B.G."/>
            <person name="Parkhill J."/>
        </authorList>
    </citation>
    <scope>NUCLEOTIDE SEQUENCE [LARGE SCALE GENOMIC DNA]</scope>
    <source>
        <strain>ATCC 700971 / NCTC 13129 / Biotype gravis</strain>
    </source>
</reference>
<feature type="chain" id="PRO_0000151138" description="Undecaprenyl-diphosphatase">
    <location>
        <begin position="1"/>
        <end position="282"/>
    </location>
</feature>
<feature type="transmembrane region" description="Helical" evidence="1">
    <location>
        <begin position="96"/>
        <end position="116"/>
    </location>
</feature>
<feature type="transmembrane region" description="Helical" evidence="1">
    <location>
        <begin position="123"/>
        <end position="143"/>
    </location>
</feature>
<feature type="transmembrane region" description="Helical" evidence="1">
    <location>
        <begin position="198"/>
        <end position="218"/>
    </location>
</feature>
<feature type="transmembrane region" description="Helical" evidence="1">
    <location>
        <begin position="229"/>
        <end position="249"/>
    </location>
</feature>
<feature type="transmembrane region" description="Helical" evidence="1">
    <location>
        <begin position="260"/>
        <end position="280"/>
    </location>
</feature>
<proteinExistence type="inferred from homology"/>